<feature type="chain" id="PRO_1000053216" description="ATP synthase gamma chain">
    <location>
        <begin position="1"/>
        <end position="298"/>
    </location>
</feature>
<comment type="function">
    <text evidence="1">Produces ATP from ADP in the presence of a proton gradient across the membrane. The gamma chain is believed to be important in regulating ATPase activity and the flow of protons through the CF(0) complex.</text>
</comment>
<comment type="subunit">
    <text evidence="1">F-type ATPases have 2 components, CF(1) - the catalytic core - and CF(0) - the membrane proton channel. CF(1) has five subunits: alpha(3), beta(3), gamma(1), delta(1), epsilon(1). CF(0) has three main subunits: a, b and c.</text>
</comment>
<comment type="subcellular location">
    <subcellularLocation>
        <location evidence="1">Cell inner membrane</location>
        <topology evidence="1">Peripheral membrane protein</topology>
    </subcellularLocation>
</comment>
<comment type="similarity">
    <text evidence="1">Belongs to the ATPase gamma chain family.</text>
</comment>
<name>ATPG_FRATO</name>
<proteinExistence type="inferred from homology"/>
<reference key="1">
    <citation type="journal article" date="2006" name="J. Bacteriol.">
        <title>Chromosome rearrangement and diversification of Francisella tularensis revealed by the type B (OSU18) genome sequence.</title>
        <authorList>
            <person name="Petrosino J.F."/>
            <person name="Xiang Q."/>
            <person name="Karpathy S.E."/>
            <person name="Jiang H."/>
            <person name="Yerrapragada S."/>
            <person name="Liu Y."/>
            <person name="Gioia J."/>
            <person name="Hemphill L."/>
            <person name="Gonzalez A."/>
            <person name="Raghavan T.M."/>
            <person name="Uzman A."/>
            <person name="Fox G.E."/>
            <person name="Highlander S."/>
            <person name="Reichard M."/>
            <person name="Morton R.J."/>
            <person name="Clinkenbeard K.D."/>
            <person name="Weinstock G.M."/>
        </authorList>
    </citation>
    <scope>NUCLEOTIDE SEQUENCE [LARGE SCALE GENOMIC DNA]</scope>
    <source>
        <strain>OSU18</strain>
    </source>
</reference>
<organism>
    <name type="scientific">Francisella tularensis subsp. holarctica (strain OSU18)</name>
    <dbReference type="NCBI Taxonomy" id="393011"/>
    <lineage>
        <taxon>Bacteria</taxon>
        <taxon>Pseudomonadati</taxon>
        <taxon>Pseudomonadota</taxon>
        <taxon>Gammaproteobacteria</taxon>
        <taxon>Thiotrichales</taxon>
        <taxon>Francisellaceae</taxon>
        <taxon>Francisella</taxon>
    </lineage>
</organism>
<dbReference type="EMBL" id="CP000437">
    <property type="protein sequence ID" value="ABI83501.1"/>
    <property type="molecule type" value="Genomic_DNA"/>
</dbReference>
<dbReference type="RefSeq" id="WP_003019684.1">
    <property type="nucleotide sequence ID" value="NC_017463.1"/>
</dbReference>
<dbReference type="SMR" id="Q0BK83"/>
<dbReference type="KEGG" id="fth:FTH_1733"/>
<dbReference type="GO" id="GO:0005886">
    <property type="term" value="C:plasma membrane"/>
    <property type="evidence" value="ECO:0007669"/>
    <property type="project" value="UniProtKB-SubCell"/>
</dbReference>
<dbReference type="GO" id="GO:0045259">
    <property type="term" value="C:proton-transporting ATP synthase complex"/>
    <property type="evidence" value="ECO:0007669"/>
    <property type="project" value="UniProtKB-KW"/>
</dbReference>
<dbReference type="GO" id="GO:0005524">
    <property type="term" value="F:ATP binding"/>
    <property type="evidence" value="ECO:0007669"/>
    <property type="project" value="UniProtKB-UniRule"/>
</dbReference>
<dbReference type="GO" id="GO:0046933">
    <property type="term" value="F:proton-transporting ATP synthase activity, rotational mechanism"/>
    <property type="evidence" value="ECO:0007669"/>
    <property type="project" value="UniProtKB-UniRule"/>
</dbReference>
<dbReference type="GO" id="GO:0042777">
    <property type="term" value="P:proton motive force-driven plasma membrane ATP synthesis"/>
    <property type="evidence" value="ECO:0007669"/>
    <property type="project" value="UniProtKB-UniRule"/>
</dbReference>
<dbReference type="CDD" id="cd12151">
    <property type="entry name" value="F1-ATPase_gamma"/>
    <property type="match status" value="1"/>
</dbReference>
<dbReference type="Gene3D" id="3.40.1380.10">
    <property type="match status" value="1"/>
</dbReference>
<dbReference type="Gene3D" id="1.10.287.80">
    <property type="entry name" value="ATP synthase, gamma subunit, helix hairpin domain"/>
    <property type="match status" value="1"/>
</dbReference>
<dbReference type="HAMAP" id="MF_00815">
    <property type="entry name" value="ATP_synth_gamma_bact"/>
    <property type="match status" value="1"/>
</dbReference>
<dbReference type="InterPro" id="IPR035968">
    <property type="entry name" value="ATP_synth_F1_ATPase_gsu"/>
</dbReference>
<dbReference type="InterPro" id="IPR000131">
    <property type="entry name" value="ATP_synth_F1_gsu"/>
</dbReference>
<dbReference type="InterPro" id="IPR023632">
    <property type="entry name" value="ATP_synth_F1_gsu_CS"/>
</dbReference>
<dbReference type="NCBIfam" id="TIGR01146">
    <property type="entry name" value="ATPsyn_F1gamma"/>
    <property type="match status" value="1"/>
</dbReference>
<dbReference type="NCBIfam" id="NF009956">
    <property type="entry name" value="PRK13422.1"/>
    <property type="match status" value="1"/>
</dbReference>
<dbReference type="PANTHER" id="PTHR11693">
    <property type="entry name" value="ATP SYNTHASE GAMMA CHAIN"/>
    <property type="match status" value="1"/>
</dbReference>
<dbReference type="PANTHER" id="PTHR11693:SF22">
    <property type="entry name" value="ATP SYNTHASE SUBUNIT GAMMA, MITOCHONDRIAL"/>
    <property type="match status" value="1"/>
</dbReference>
<dbReference type="Pfam" id="PF00231">
    <property type="entry name" value="ATP-synt"/>
    <property type="match status" value="1"/>
</dbReference>
<dbReference type="PRINTS" id="PR00126">
    <property type="entry name" value="ATPASEGAMMA"/>
</dbReference>
<dbReference type="SUPFAM" id="SSF52943">
    <property type="entry name" value="ATP synthase (F1-ATPase), gamma subunit"/>
    <property type="match status" value="1"/>
</dbReference>
<dbReference type="PROSITE" id="PS00153">
    <property type="entry name" value="ATPASE_GAMMA"/>
    <property type="match status" value="1"/>
</dbReference>
<accession>Q0BK83</accession>
<gene>
    <name evidence="1" type="primary">atpG</name>
    <name type="ordered locus">FTH_1733</name>
</gene>
<sequence length="298" mass="33187">MSNAREIRSKVQSVKNTQKITGAMELVAASKMRGAIVKMNNVRPYVESANTIIKNVTAASIDYPNPYLFDRDVKRVGYIVTSTDRGLCGGLNINLFKHVLKEIKNNIEDRVGVDVCVIGSKAENFFAKLKDVNIVATAHYNDKDKEGSIRAIGGAVKVMLDKFTAGEIDRLYMSSNQFVSTIKQRPRLQTLLPIQDIFSAEEIKANKEKATKGHWDYIYERDIEEVLNALCIRYIEAQVRGAILENAACEQAARMMAMKNATDNASDIIDQLKLDYNKVRQAMITQELAEICSGAAAV</sequence>
<protein>
    <recommendedName>
        <fullName evidence="1">ATP synthase gamma chain</fullName>
    </recommendedName>
    <alternativeName>
        <fullName evidence="1">ATP synthase F1 sector gamma subunit</fullName>
    </alternativeName>
    <alternativeName>
        <fullName evidence="1">F-ATPase gamma subunit</fullName>
    </alternativeName>
</protein>
<evidence type="ECO:0000255" key="1">
    <source>
        <dbReference type="HAMAP-Rule" id="MF_00815"/>
    </source>
</evidence>
<keyword id="KW-0066">ATP synthesis</keyword>
<keyword id="KW-0997">Cell inner membrane</keyword>
<keyword id="KW-1003">Cell membrane</keyword>
<keyword id="KW-0139">CF(1)</keyword>
<keyword id="KW-0375">Hydrogen ion transport</keyword>
<keyword id="KW-0406">Ion transport</keyword>
<keyword id="KW-0472">Membrane</keyword>
<keyword id="KW-0813">Transport</keyword>